<sequence length="331" mass="35655">MVSSTSELITQPVNREEVVPSRKRIKLPAWLEVVKPRLIPLLLATTVGGMALSEEWPLPSPRLACTLGGGALAAAAAGALNCLWEQDLDKRMKRTSNRALPSGRLSQSSVFIGAVACTLVSSALLVSGVNCLAAGLTLLGLCSYVLLYTAFLKPRTSQNIVFGGVAGAIPPLVGASAAAGHIGLGGWWLFSLVMVWTPAHFWALAILLKEDYRSVGIPMLPTVSGPFVTAKAISVYGYLTVFLSFLGCFVLPEGGLLYGILLLPYNSRLLQLVSRLRDNPEDLDRAKGLFRWSILYMFGVCFLLVISRLQVSIVFNDQLIALIKDFSIGFS</sequence>
<proteinExistence type="inferred from homology"/>
<gene>
    <name evidence="1" type="primary">ctaB</name>
    <name type="ordered locus">NATL1_05021</name>
</gene>
<evidence type="ECO:0000255" key="1">
    <source>
        <dbReference type="HAMAP-Rule" id="MF_00154"/>
    </source>
</evidence>
<dbReference type="EC" id="2.5.1.141" evidence="1"/>
<dbReference type="EMBL" id="CP000553">
    <property type="protein sequence ID" value="ABM75064.1"/>
    <property type="molecule type" value="Genomic_DNA"/>
</dbReference>
<dbReference type="RefSeq" id="WP_011823247.1">
    <property type="nucleotide sequence ID" value="NC_008819.1"/>
</dbReference>
<dbReference type="SMR" id="A2C0Q4"/>
<dbReference type="KEGG" id="pme:NATL1_05021"/>
<dbReference type="eggNOG" id="COG0109">
    <property type="taxonomic scope" value="Bacteria"/>
</dbReference>
<dbReference type="HOGENOM" id="CLU_029631_0_2_3"/>
<dbReference type="UniPathway" id="UPA00834">
    <property type="reaction ID" value="UER00712"/>
</dbReference>
<dbReference type="Proteomes" id="UP000002592">
    <property type="component" value="Chromosome"/>
</dbReference>
<dbReference type="GO" id="GO:0005886">
    <property type="term" value="C:plasma membrane"/>
    <property type="evidence" value="ECO:0007669"/>
    <property type="project" value="UniProtKB-SubCell"/>
</dbReference>
<dbReference type="GO" id="GO:0008495">
    <property type="term" value="F:protoheme IX farnesyltransferase activity"/>
    <property type="evidence" value="ECO:0007669"/>
    <property type="project" value="UniProtKB-UniRule"/>
</dbReference>
<dbReference type="GO" id="GO:0048034">
    <property type="term" value="P:heme O biosynthetic process"/>
    <property type="evidence" value="ECO:0007669"/>
    <property type="project" value="UniProtKB-UniRule"/>
</dbReference>
<dbReference type="CDD" id="cd13957">
    <property type="entry name" value="PT_UbiA_Cox10"/>
    <property type="match status" value="1"/>
</dbReference>
<dbReference type="Gene3D" id="1.10.357.140">
    <property type="entry name" value="UbiA prenyltransferase"/>
    <property type="match status" value="1"/>
</dbReference>
<dbReference type="HAMAP" id="MF_00154">
    <property type="entry name" value="CyoE_CtaB"/>
    <property type="match status" value="1"/>
</dbReference>
<dbReference type="InterPro" id="IPR006369">
    <property type="entry name" value="Protohaem_IX_farnesylTrfase"/>
</dbReference>
<dbReference type="InterPro" id="IPR000537">
    <property type="entry name" value="UbiA_prenyltransferase"/>
</dbReference>
<dbReference type="InterPro" id="IPR030470">
    <property type="entry name" value="UbiA_prenylTrfase_CS"/>
</dbReference>
<dbReference type="InterPro" id="IPR044878">
    <property type="entry name" value="UbiA_sf"/>
</dbReference>
<dbReference type="NCBIfam" id="TIGR01473">
    <property type="entry name" value="cyoE_ctaB"/>
    <property type="match status" value="1"/>
</dbReference>
<dbReference type="NCBIfam" id="NF003349">
    <property type="entry name" value="PRK04375.1-2"/>
    <property type="match status" value="1"/>
</dbReference>
<dbReference type="PANTHER" id="PTHR43448:SF7">
    <property type="entry name" value="4-HYDROXYBENZOATE SOLANESYLTRANSFERASE"/>
    <property type="match status" value="1"/>
</dbReference>
<dbReference type="PANTHER" id="PTHR43448">
    <property type="entry name" value="PROTOHEME IX FARNESYLTRANSFERASE, MITOCHONDRIAL"/>
    <property type="match status" value="1"/>
</dbReference>
<dbReference type="Pfam" id="PF01040">
    <property type="entry name" value="UbiA"/>
    <property type="match status" value="1"/>
</dbReference>
<dbReference type="PROSITE" id="PS00943">
    <property type="entry name" value="UBIA"/>
    <property type="match status" value="1"/>
</dbReference>
<name>COXX_PROM1</name>
<accession>A2C0Q4</accession>
<feature type="chain" id="PRO_0000327120" description="Protoheme IX farnesyltransferase">
    <location>
        <begin position="1"/>
        <end position="331"/>
    </location>
</feature>
<feature type="transmembrane region" description="Helical" evidence="1">
    <location>
        <begin position="63"/>
        <end position="83"/>
    </location>
</feature>
<feature type="transmembrane region" description="Helical" evidence="1">
    <location>
        <begin position="109"/>
        <end position="129"/>
    </location>
</feature>
<feature type="transmembrane region" description="Helical" evidence="1">
    <location>
        <begin position="132"/>
        <end position="152"/>
    </location>
</feature>
<feature type="transmembrane region" description="Helical" evidence="1">
    <location>
        <begin position="160"/>
        <end position="180"/>
    </location>
</feature>
<feature type="transmembrane region" description="Helical" evidence="1">
    <location>
        <begin position="188"/>
        <end position="208"/>
    </location>
</feature>
<feature type="transmembrane region" description="Helical" evidence="1">
    <location>
        <begin position="215"/>
        <end position="235"/>
    </location>
</feature>
<feature type="transmembrane region" description="Helical" evidence="1">
    <location>
        <begin position="241"/>
        <end position="261"/>
    </location>
</feature>
<feature type="transmembrane region" description="Helical" evidence="1">
    <location>
        <begin position="294"/>
        <end position="314"/>
    </location>
</feature>
<protein>
    <recommendedName>
        <fullName evidence="1">Protoheme IX farnesyltransferase</fullName>
        <ecNumber evidence="1">2.5.1.141</ecNumber>
    </recommendedName>
    <alternativeName>
        <fullName evidence="1">Heme B farnesyltransferase</fullName>
    </alternativeName>
    <alternativeName>
        <fullName evidence="1">Heme O synthase</fullName>
    </alternativeName>
</protein>
<reference key="1">
    <citation type="journal article" date="2007" name="PLoS Genet.">
        <title>Patterns and implications of gene gain and loss in the evolution of Prochlorococcus.</title>
        <authorList>
            <person name="Kettler G.C."/>
            <person name="Martiny A.C."/>
            <person name="Huang K."/>
            <person name="Zucker J."/>
            <person name="Coleman M.L."/>
            <person name="Rodrigue S."/>
            <person name="Chen F."/>
            <person name="Lapidus A."/>
            <person name="Ferriera S."/>
            <person name="Johnson J."/>
            <person name="Steglich C."/>
            <person name="Church G.M."/>
            <person name="Richardson P."/>
            <person name="Chisholm S.W."/>
        </authorList>
    </citation>
    <scope>NUCLEOTIDE SEQUENCE [LARGE SCALE GENOMIC DNA]</scope>
    <source>
        <strain>NATL1A</strain>
    </source>
</reference>
<organism>
    <name type="scientific">Prochlorococcus marinus (strain NATL1A)</name>
    <dbReference type="NCBI Taxonomy" id="167555"/>
    <lineage>
        <taxon>Bacteria</taxon>
        <taxon>Bacillati</taxon>
        <taxon>Cyanobacteriota</taxon>
        <taxon>Cyanophyceae</taxon>
        <taxon>Synechococcales</taxon>
        <taxon>Prochlorococcaceae</taxon>
        <taxon>Prochlorococcus</taxon>
    </lineage>
</organism>
<keyword id="KW-0997">Cell inner membrane</keyword>
<keyword id="KW-1003">Cell membrane</keyword>
<keyword id="KW-0350">Heme biosynthesis</keyword>
<keyword id="KW-0472">Membrane</keyword>
<keyword id="KW-0808">Transferase</keyword>
<keyword id="KW-0812">Transmembrane</keyword>
<keyword id="KW-1133">Transmembrane helix</keyword>
<comment type="function">
    <text evidence="1">Converts heme B (protoheme IX) to heme O by substitution of the vinyl group on carbon 2 of heme B porphyrin ring with a hydroxyethyl farnesyl side group.</text>
</comment>
<comment type="catalytic activity">
    <reaction evidence="1">
        <text>heme b + (2E,6E)-farnesyl diphosphate + H2O = Fe(II)-heme o + diphosphate</text>
        <dbReference type="Rhea" id="RHEA:28070"/>
        <dbReference type="ChEBI" id="CHEBI:15377"/>
        <dbReference type="ChEBI" id="CHEBI:33019"/>
        <dbReference type="ChEBI" id="CHEBI:60344"/>
        <dbReference type="ChEBI" id="CHEBI:60530"/>
        <dbReference type="ChEBI" id="CHEBI:175763"/>
        <dbReference type="EC" id="2.5.1.141"/>
    </reaction>
</comment>
<comment type="pathway">
    <text evidence="1">Porphyrin-containing compound metabolism; heme O biosynthesis; heme O from protoheme: step 1/1.</text>
</comment>
<comment type="subcellular location">
    <subcellularLocation>
        <location evidence="1">Cell inner membrane</location>
        <topology evidence="1">Multi-pass membrane protein</topology>
    </subcellularLocation>
</comment>
<comment type="miscellaneous">
    <text evidence="1">Carbon 2 of the heme B porphyrin ring is defined according to the Fischer nomenclature.</text>
</comment>
<comment type="similarity">
    <text evidence="1">Belongs to the UbiA prenyltransferase family. Protoheme IX farnesyltransferase subfamily.</text>
</comment>